<accession>B2S8J9</accession>
<gene>
    <name evidence="1" type="primary">thiG</name>
    <name type="ordered locus">BAbS19_I02030</name>
</gene>
<proteinExistence type="inferred from homology"/>
<sequence length="256" mass="27321">MLEFYGKRFESRLLLGTAQYPSPSILADAVRASLSRIVTVSLRRESGEARAGQDFWALIKALGVAVLPNTAGCHTPREAITTAHMAREVFGTNWIKLEVIGDTDTLQPDPFGLVEAARILCDEGFEVFPYMNDDLIVAERLIEAGCKVLMPWGAPIGSGRGLNNPYALKTMRAHFPDIPLVVDAGIGVPSHAAAAMELGFDAVLINTAVAKAGDPAAMARAFALAVEAGRLAYEADPIEARDMASPSTPLLGKAFL</sequence>
<reference key="1">
    <citation type="journal article" date="2008" name="PLoS ONE">
        <title>Genome sequence of Brucella abortus vaccine strain S19 compared to virulent strains yields candidate virulence genes.</title>
        <authorList>
            <person name="Crasta O.R."/>
            <person name="Folkerts O."/>
            <person name="Fei Z."/>
            <person name="Mane S.P."/>
            <person name="Evans C."/>
            <person name="Martino-Catt S."/>
            <person name="Bricker B."/>
            <person name="Yu G."/>
            <person name="Du L."/>
            <person name="Sobral B.W."/>
        </authorList>
    </citation>
    <scope>NUCLEOTIDE SEQUENCE [LARGE SCALE GENOMIC DNA]</scope>
    <source>
        <strain>S19</strain>
    </source>
</reference>
<organism>
    <name type="scientific">Brucella abortus (strain S19)</name>
    <dbReference type="NCBI Taxonomy" id="430066"/>
    <lineage>
        <taxon>Bacteria</taxon>
        <taxon>Pseudomonadati</taxon>
        <taxon>Pseudomonadota</taxon>
        <taxon>Alphaproteobacteria</taxon>
        <taxon>Hyphomicrobiales</taxon>
        <taxon>Brucellaceae</taxon>
        <taxon>Brucella/Ochrobactrum group</taxon>
        <taxon>Brucella</taxon>
    </lineage>
</organism>
<protein>
    <recommendedName>
        <fullName evidence="1">Thiazole synthase</fullName>
        <ecNumber evidence="1">2.8.1.10</ecNumber>
    </recommendedName>
</protein>
<dbReference type="EC" id="2.8.1.10" evidence="1"/>
<dbReference type="EMBL" id="CP000887">
    <property type="protein sequence ID" value="ACD71752.1"/>
    <property type="molecule type" value="Genomic_DNA"/>
</dbReference>
<dbReference type="RefSeq" id="WP_002965462.1">
    <property type="nucleotide sequence ID" value="NC_010742.1"/>
</dbReference>
<dbReference type="SMR" id="B2S8J9"/>
<dbReference type="KEGG" id="bmc:BAbS19_I02030"/>
<dbReference type="HOGENOM" id="CLU_062233_1_0_5"/>
<dbReference type="UniPathway" id="UPA00060"/>
<dbReference type="Proteomes" id="UP000002565">
    <property type="component" value="Chromosome 1"/>
</dbReference>
<dbReference type="GO" id="GO:0005737">
    <property type="term" value="C:cytoplasm"/>
    <property type="evidence" value="ECO:0007669"/>
    <property type="project" value="UniProtKB-SubCell"/>
</dbReference>
<dbReference type="GO" id="GO:1990107">
    <property type="term" value="F:thiazole synthase activity"/>
    <property type="evidence" value="ECO:0007669"/>
    <property type="project" value="UniProtKB-EC"/>
</dbReference>
<dbReference type="GO" id="GO:0009229">
    <property type="term" value="P:thiamine diphosphate biosynthetic process"/>
    <property type="evidence" value="ECO:0007669"/>
    <property type="project" value="UniProtKB-UniRule"/>
</dbReference>
<dbReference type="CDD" id="cd04728">
    <property type="entry name" value="ThiG"/>
    <property type="match status" value="1"/>
</dbReference>
<dbReference type="Gene3D" id="3.20.20.70">
    <property type="entry name" value="Aldolase class I"/>
    <property type="match status" value="1"/>
</dbReference>
<dbReference type="HAMAP" id="MF_00443">
    <property type="entry name" value="ThiG"/>
    <property type="match status" value="1"/>
</dbReference>
<dbReference type="InterPro" id="IPR013785">
    <property type="entry name" value="Aldolase_TIM"/>
</dbReference>
<dbReference type="InterPro" id="IPR033983">
    <property type="entry name" value="Thiazole_synthase_ThiG"/>
</dbReference>
<dbReference type="InterPro" id="IPR008867">
    <property type="entry name" value="ThiG"/>
</dbReference>
<dbReference type="PANTHER" id="PTHR34266">
    <property type="entry name" value="THIAZOLE SYNTHASE"/>
    <property type="match status" value="1"/>
</dbReference>
<dbReference type="PANTHER" id="PTHR34266:SF2">
    <property type="entry name" value="THIAZOLE SYNTHASE"/>
    <property type="match status" value="1"/>
</dbReference>
<dbReference type="Pfam" id="PF05690">
    <property type="entry name" value="ThiG"/>
    <property type="match status" value="1"/>
</dbReference>
<dbReference type="SUPFAM" id="SSF110399">
    <property type="entry name" value="ThiG-like"/>
    <property type="match status" value="1"/>
</dbReference>
<feature type="chain" id="PRO_1000124607" description="Thiazole synthase">
    <location>
        <begin position="1"/>
        <end position="256"/>
    </location>
</feature>
<feature type="active site" description="Schiff-base intermediate with DXP" evidence="1">
    <location>
        <position position="96"/>
    </location>
</feature>
<feature type="binding site" evidence="1">
    <location>
        <position position="157"/>
    </location>
    <ligand>
        <name>1-deoxy-D-xylulose 5-phosphate</name>
        <dbReference type="ChEBI" id="CHEBI:57792"/>
    </ligand>
</feature>
<feature type="binding site" evidence="1">
    <location>
        <begin position="184"/>
        <end position="185"/>
    </location>
    <ligand>
        <name>1-deoxy-D-xylulose 5-phosphate</name>
        <dbReference type="ChEBI" id="CHEBI:57792"/>
    </ligand>
</feature>
<feature type="binding site" evidence="1">
    <location>
        <begin position="206"/>
        <end position="207"/>
    </location>
    <ligand>
        <name>1-deoxy-D-xylulose 5-phosphate</name>
        <dbReference type="ChEBI" id="CHEBI:57792"/>
    </ligand>
</feature>
<name>THIG_BRUA1</name>
<comment type="function">
    <text evidence="1">Catalyzes the rearrangement of 1-deoxy-D-xylulose 5-phosphate (DXP) to produce the thiazole phosphate moiety of thiamine. Sulfur is provided by the thiocarboxylate moiety of the carrier protein ThiS. In vitro, sulfur can be provided by H(2)S.</text>
</comment>
<comment type="catalytic activity">
    <reaction evidence="1">
        <text>[ThiS sulfur-carrier protein]-C-terminal-Gly-aminoethanethioate + 2-iminoacetate + 1-deoxy-D-xylulose 5-phosphate = [ThiS sulfur-carrier protein]-C-terminal Gly-Gly + 2-[(2R,5Z)-2-carboxy-4-methylthiazol-5(2H)-ylidene]ethyl phosphate + 2 H2O + H(+)</text>
        <dbReference type="Rhea" id="RHEA:26297"/>
        <dbReference type="Rhea" id="RHEA-COMP:12909"/>
        <dbReference type="Rhea" id="RHEA-COMP:19908"/>
        <dbReference type="ChEBI" id="CHEBI:15377"/>
        <dbReference type="ChEBI" id="CHEBI:15378"/>
        <dbReference type="ChEBI" id="CHEBI:57792"/>
        <dbReference type="ChEBI" id="CHEBI:62899"/>
        <dbReference type="ChEBI" id="CHEBI:77846"/>
        <dbReference type="ChEBI" id="CHEBI:90778"/>
        <dbReference type="ChEBI" id="CHEBI:232372"/>
        <dbReference type="EC" id="2.8.1.10"/>
    </reaction>
</comment>
<comment type="pathway">
    <text evidence="1">Cofactor biosynthesis; thiamine diphosphate biosynthesis.</text>
</comment>
<comment type="subunit">
    <text evidence="1">Homotetramer. Forms heterodimers with either ThiH or ThiS.</text>
</comment>
<comment type="subcellular location">
    <subcellularLocation>
        <location evidence="1">Cytoplasm</location>
    </subcellularLocation>
</comment>
<comment type="similarity">
    <text evidence="1">Belongs to the ThiG family.</text>
</comment>
<evidence type="ECO:0000255" key="1">
    <source>
        <dbReference type="HAMAP-Rule" id="MF_00443"/>
    </source>
</evidence>
<keyword id="KW-0963">Cytoplasm</keyword>
<keyword id="KW-0704">Schiff base</keyword>
<keyword id="KW-0784">Thiamine biosynthesis</keyword>
<keyword id="KW-0808">Transferase</keyword>